<sequence>LSPTQDFMRF</sequence>
<proteinExistence type="evidence at protein level"/>
<comment type="subcellular location">
    <subcellularLocation>
        <location evidence="4">Secreted</location>
    </subcellularLocation>
</comment>
<comment type="mass spectrometry"/>
<comment type="similarity">
    <text evidence="1">Belongs to the FARP (FMRFamide related peptide) family.</text>
</comment>
<evidence type="ECO:0000255" key="1"/>
<evidence type="ECO:0000269" key="2">
    <source>
    </source>
</evidence>
<evidence type="ECO:0000303" key="3">
    <source>
    </source>
</evidence>
<evidence type="ECO:0000305" key="4"/>
<feature type="peptide" id="PRO_0000371764" description="FMRFamide-5">
    <location>
        <begin position="1"/>
        <end position="10"/>
    </location>
</feature>
<feature type="modified residue" description="Phenylalanine amide" evidence="2">
    <location>
        <position position="10"/>
    </location>
</feature>
<name>FAR5_SARBU</name>
<keyword id="KW-0027">Amidation</keyword>
<keyword id="KW-0903">Direct protein sequencing</keyword>
<keyword id="KW-0527">Neuropeptide</keyword>
<keyword id="KW-0964">Secreted</keyword>
<reference evidence="4" key="1">
    <citation type="journal article" date="2009" name="Gen. Comp. Endocrinol.">
        <title>Extended FMRFamides in dipteran insects: conservative expression in the neuroendocrine system is accompanied by rapid sequence evolution.</title>
        <authorList>
            <person name="Rahman M.M."/>
            <person name="Fromm B."/>
            <person name="Neupert S."/>
            <person name="Kreusch S."/>
            <person name="Predel R."/>
        </authorList>
    </citation>
    <scope>PROTEIN SEQUENCE</scope>
    <scope>MASS SPECTROMETRY</scope>
    <scope>AMIDATION AT PHE-10</scope>
    <source>
        <tissue evidence="2">Thoracic ganglionic sheath</tissue>
    </source>
</reference>
<dbReference type="GO" id="GO:0005576">
    <property type="term" value="C:extracellular region"/>
    <property type="evidence" value="ECO:0007669"/>
    <property type="project" value="UniProtKB-SubCell"/>
</dbReference>
<dbReference type="GO" id="GO:0007218">
    <property type="term" value="P:neuropeptide signaling pathway"/>
    <property type="evidence" value="ECO:0007669"/>
    <property type="project" value="UniProtKB-KW"/>
</dbReference>
<protein>
    <recommendedName>
        <fullName>FMRFamide-5</fullName>
    </recommendedName>
    <alternativeName>
        <fullName evidence="3">SabFMRFamide-5</fullName>
    </alternativeName>
</protein>
<accession>P85478</accession>
<organism>
    <name type="scientific">Sarcophaga bullata</name>
    <name type="common">Grey flesh fly</name>
    <name type="synonym">Neobellieria bullata</name>
    <dbReference type="NCBI Taxonomy" id="7385"/>
    <lineage>
        <taxon>Eukaryota</taxon>
        <taxon>Metazoa</taxon>
        <taxon>Ecdysozoa</taxon>
        <taxon>Arthropoda</taxon>
        <taxon>Hexapoda</taxon>
        <taxon>Insecta</taxon>
        <taxon>Pterygota</taxon>
        <taxon>Neoptera</taxon>
        <taxon>Endopterygota</taxon>
        <taxon>Diptera</taxon>
        <taxon>Brachycera</taxon>
        <taxon>Muscomorpha</taxon>
        <taxon>Oestroidea</taxon>
        <taxon>Sarcophagidae</taxon>
        <taxon>Sarcophaga</taxon>
        <taxon>Neobellieria</taxon>
    </lineage>
</organism>